<gene>
    <name evidence="2" type="primary">dnaaf2</name>
    <name evidence="2" type="synonym">ktu</name>
</gene>
<name>KTU_XENTR</name>
<dbReference type="EMBL" id="BC121889">
    <property type="protein sequence ID" value="AAI21890.1"/>
    <property type="molecule type" value="mRNA"/>
</dbReference>
<dbReference type="RefSeq" id="NP_001072474.1">
    <property type="nucleotide sequence ID" value="NM_001079006.1"/>
</dbReference>
<dbReference type="SMR" id="Q0P4V4"/>
<dbReference type="FunCoup" id="Q0P4V4">
    <property type="interactions" value="243"/>
</dbReference>
<dbReference type="STRING" id="8364.ENSXETP00000022585"/>
<dbReference type="PaxDb" id="8364-ENSXETP00000020006"/>
<dbReference type="GeneID" id="779929"/>
<dbReference type="KEGG" id="xtr:779929"/>
<dbReference type="AGR" id="Xenbase:XB-GENE-5887533"/>
<dbReference type="CTD" id="55172"/>
<dbReference type="Xenbase" id="XB-GENE-5887533">
    <property type="gene designation" value="dnaaf2"/>
</dbReference>
<dbReference type="eggNOG" id="KOG4356">
    <property type="taxonomic scope" value="Eukaryota"/>
</dbReference>
<dbReference type="InParanoid" id="Q0P4V4"/>
<dbReference type="OMA" id="KQCMSLT"/>
<dbReference type="OrthoDB" id="546764at2759"/>
<dbReference type="Proteomes" id="UP000008143">
    <property type="component" value="Chromosome 8"/>
</dbReference>
<dbReference type="GO" id="GO:0005737">
    <property type="term" value="C:cytoplasm"/>
    <property type="evidence" value="ECO:0000250"/>
    <property type="project" value="UniProtKB"/>
</dbReference>
<dbReference type="GO" id="GO:0120293">
    <property type="term" value="C:dynein axonemal particle"/>
    <property type="evidence" value="ECO:0000250"/>
    <property type="project" value="UniProtKB"/>
</dbReference>
<dbReference type="GO" id="GO:0070286">
    <property type="term" value="P:axonemal dynein complex assembly"/>
    <property type="evidence" value="ECO:0007669"/>
    <property type="project" value="UniProtKB-UniRule"/>
</dbReference>
<dbReference type="GO" id="GO:0060285">
    <property type="term" value="P:cilium-dependent cell motility"/>
    <property type="evidence" value="ECO:0007669"/>
    <property type="project" value="UniProtKB-UniRule"/>
</dbReference>
<dbReference type="HAMAP" id="MF_03069">
    <property type="entry name" value="Kintoun"/>
    <property type="match status" value="1"/>
</dbReference>
<dbReference type="InterPro" id="IPR008978">
    <property type="entry name" value="HSP20-like_chaperone"/>
</dbReference>
<dbReference type="InterPro" id="IPR034727">
    <property type="entry name" value="Kintoun"/>
</dbReference>
<dbReference type="InterPro" id="IPR050734">
    <property type="entry name" value="PIH1/Kintoun_subfamily"/>
</dbReference>
<dbReference type="InterPro" id="IPR012981">
    <property type="entry name" value="PIH1_N"/>
</dbReference>
<dbReference type="InterPro" id="IPR041442">
    <property type="entry name" value="PIH1D1/2/3_CS-like"/>
</dbReference>
<dbReference type="PANTHER" id="PTHR22997">
    <property type="entry name" value="PIH1 DOMAIN-CONTAINING PROTEIN 1"/>
    <property type="match status" value="1"/>
</dbReference>
<dbReference type="PANTHER" id="PTHR22997:SF3">
    <property type="entry name" value="PROTEIN KINTOUN"/>
    <property type="match status" value="1"/>
</dbReference>
<dbReference type="Pfam" id="PF08190">
    <property type="entry name" value="PIH1"/>
    <property type="match status" value="1"/>
</dbReference>
<dbReference type="Pfam" id="PF18201">
    <property type="entry name" value="PIH1_CS"/>
    <property type="match status" value="1"/>
</dbReference>
<dbReference type="SUPFAM" id="SSF49764">
    <property type="entry name" value="HSP20-like chaperones"/>
    <property type="match status" value="1"/>
</dbReference>
<sequence length="785" mass="88104">MAAKLQDLELSSEEVDRFSKAFKDPTFREMFIQYAEEISDPENRKKYEQEIYKMENERGMDIKFIHPKPGYVLLSSVNGVQKCYLNICSNDLIQKPEFKPGKDGEGKAGLHWSLPYSLSPGRDDLSKDWSKHVIYDVVFHPDTLHIASKNGKFKGIVDSTALEAVASQFNVTLDKANVRTLSMKYKGVPNPSVLRKPLPEASPKSRDLEDPLCFPYPYDVPTAVGTEKKDQKRVIQKECKQHLVTPEQDPNVQVAATPNYTVRHRSYVDLQDFRDSRDSTPSPVPKELVITVDLPLLNSAAGVNLHIAGKNLSLESEKPAYKLNVKLPYAVEDNQGKAQFNKVKKQLIITVPVIQHNILSLMQDHFQEARGEKDNQNKAEHSVLNKEHTDNSGITSARGTEKLLELEEENQFEGLASISSMDTGASHLPEILPNLNTFGKEQVVNQMNEDTPNVPTDNLVCPTFTCSQDPTSLTLIVHVRDIDENSICADVGSNHYHIRCYRKQSRAFYDLLVTFLPHDIIISNEVSVNISEDNVVIGLTKCPESFGFWKKLYFGVSGQSLQERRFVIEENINKVLACSIPLSQVSPSIQEHQPLIEVLEMTDEKTHIRLNEPKIEYVDSAEHNEQCTDHSESERDTSLELPNVDGKDSAEQCSSQVSPCKHNIELGREHTSERDKEPKPTSCTAESTSGQQPNDSHLVCPGDNCAQDSNAENKMACLKSSVQTTQESDLDEDDMPDNSDHLQNSASSNNILKEISSKDGSVQVISDHTTHCPFQFQNSLLFELD</sequence>
<evidence type="ECO:0000250" key="1">
    <source>
        <dbReference type="UniProtKB" id="B1H1W9"/>
    </source>
</evidence>
<evidence type="ECO:0000255" key="2">
    <source>
        <dbReference type="HAMAP-Rule" id="MF_03069"/>
    </source>
</evidence>
<evidence type="ECO:0000256" key="3">
    <source>
        <dbReference type="SAM" id="MobiDB-lite"/>
    </source>
</evidence>
<reference key="1">
    <citation type="submission" date="2006-08" db="EMBL/GenBank/DDBJ databases">
        <authorList>
            <consortium name="NIH - Xenopus Gene Collection (XGC) project"/>
        </authorList>
    </citation>
    <scope>NUCLEOTIDE SEQUENCE [LARGE SCALE MRNA]</scope>
    <source>
        <tissue>Testis</tissue>
    </source>
</reference>
<comment type="function">
    <text evidence="2">Required for cytoplasmic pre-assembly of axonemal dyneins, thereby playing a central role in motility in cilia and flagella. Involved in pre-assembly of dynein arm complexes in the cytoplasm before intraflagellar transport loads them for the ciliary compartment.</text>
</comment>
<comment type="subcellular location">
    <subcellularLocation>
        <location evidence="2">Cytoplasm</location>
    </subcellularLocation>
    <subcellularLocation>
        <location evidence="1">Dynein axonemal particle</location>
    </subcellularLocation>
    <text evidence="2">Localizes in the apical cytoplasm around the gamma-tubulin-positive pericentriolar region, not in the cilia.</text>
</comment>
<comment type="similarity">
    <text evidence="2">Belongs to the PIH1 family. Kintoun subfamily.</text>
</comment>
<accession>Q0P4V4</accession>
<proteinExistence type="evidence at transcript level"/>
<keyword id="KW-0963">Cytoplasm</keyword>
<keyword id="KW-1185">Reference proteome</keyword>
<organism>
    <name type="scientific">Xenopus tropicalis</name>
    <name type="common">Western clawed frog</name>
    <name type="synonym">Silurana tropicalis</name>
    <dbReference type="NCBI Taxonomy" id="8364"/>
    <lineage>
        <taxon>Eukaryota</taxon>
        <taxon>Metazoa</taxon>
        <taxon>Chordata</taxon>
        <taxon>Craniata</taxon>
        <taxon>Vertebrata</taxon>
        <taxon>Euteleostomi</taxon>
        <taxon>Amphibia</taxon>
        <taxon>Batrachia</taxon>
        <taxon>Anura</taxon>
        <taxon>Pipoidea</taxon>
        <taxon>Pipidae</taxon>
        <taxon>Xenopodinae</taxon>
        <taxon>Xenopus</taxon>
        <taxon>Silurana</taxon>
    </lineage>
</organism>
<protein>
    <recommendedName>
        <fullName evidence="2">Protein kintoun</fullName>
    </recommendedName>
    <alternativeName>
        <fullName evidence="2">Dynein assembly factor 2, axonemal</fullName>
    </alternativeName>
</protein>
<feature type="chain" id="PRO_0000365801" description="Protein kintoun">
    <location>
        <begin position="1"/>
        <end position="785"/>
    </location>
</feature>
<feature type="region of interest" description="Disordered" evidence="3">
    <location>
        <begin position="622"/>
        <end position="698"/>
    </location>
</feature>
<feature type="region of interest" description="Disordered" evidence="3">
    <location>
        <begin position="719"/>
        <end position="749"/>
    </location>
</feature>
<feature type="compositionally biased region" description="Basic and acidic residues" evidence="3">
    <location>
        <begin position="622"/>
        <end position="638"/>
    </location>
</feature>
<feature type="compositionally biased region" description="Basic and acidic residues" evidence="3">
    <location>
        <begin position="662"/>
        <end position="679"/>
    </location>
</feature>
<feature type="compositionally biased region" description="Polar residues" evidence="3">
    <location>
        <begin position="681"/>
        <end position="695"/>
    </location>
</feature>
<feature type="compositionally biased region" description="Acidic residues" evidence="3">
    <location>
        <begin position="728"/>
        <end position="737"/>
    </location>
</feature>